<name>RSKA_MYCTE</name>
<protein>
    <recommendedName>
        <fullName>Anti-sigma-K factor RskA</fullName>
    </recommendedName>
    <alternativeName>
        <fullName>Regulator of SigK</fullName>
    </alternativeName>
    <alternativeName>
        <fullName>Sigma-K anti-sigma factor RskA</fullName>
    </alternativeName>
</protein>
<accession>H8EVS9</accession>
<reference key="1">
    <citation type="journal article" date="2012" name="J. Bacteriol.">
        <title>Complete annotated genome sequence of Mycobacterium tuberculosis Erdman.</title>
        <authorList>
            <person name="Miyoshi-Akiyama T."/>
            <person name="Matsumura K."/>
            <person name="Iwai H."/>
            <person name="Funatogawa K."/>
            <person name="Kirikae T."/>
        </authorList>
    </citation>
    <scope>NUCLEOTIDE SEQUENCE [LARGE SCALE GENOMIC DNA]</scope>
    <source>
        <strain>ATCC 35801 / TMC 107 / Erdman</strain>
    </source>
</reference>
<reference key="2">
    <citation type="journal article" date="2010" name="Mol. Microbiol.">
        <title>M. tuberculosis intramembrane protease Rip1 controls transcription through three anti-sigma factor substrates.</title>
        <authorList>
            <person name="Sklar J.G."/>
            <person name="Makinoshima H."/>
            <person name="Schneider J.S."/>
            <person name="Glickman M.S."/>
        </authorList>
    </citation>
    <scope>POSSIBLE CLEAVAGE BY RIP1</scope>
    <source>
        <strain>ATCC 35801 / TMC 107 / Erdman</strain>
    </source>
</reference>
<sequence>MTEHTDFELLELATPYALNAVSDDERADIDRRVAAAPSPVAAAFNDEVRAVRETMAVVSAATTAEPPAHLRTAILDATKPEVRRQSRWRTAAFASAAAIAVGLGAFGLGVLTRPSPPPTVAEQVLTAPDVRTVSRPLGAGTATVVFSRDRNTGLLVMNNVAPPSRGTVYQMWLLGGAKGPRSAGTMGTAAVTPSTTATLTDLGASTALAFTVEPGTGSPQPTGTILAELPLG</sequence>
<organism>
    <name type="scientific">Mycobacterium tuberculosis (strain ATCC 35801 / TMC 107 / Erdman)</name>
    <dbReference type="NCBI Taxonomy" id="652616"/>
    <lineage>
        <taxon>Bacteria</taxon>
        <taxon>Bacillati</taxon>
        <taxon>Actinomycetota</taxon>
        <taxon>Actinomycetes</taxon>
        <taxon>Mycobacteriales</taxon>
        <taxon>Mycobacteriaceae</taxon>
        <taxon>Mycobacterium</taxon>
        <taxon>Mycobacterium tuberculosis complex</taxon>
    </lineage>
</organism>
<evidence type="ECO:0000250" key="1"/>
<evidence type="ECO:0000255" key="2"/>
<evidence type="ECO:0000305" key="3"/>
<feature type="chain" id="PRO_0000422690" description="Anti-sigma-K factor RskA">
    <location>
        <begin position="1"/>
        <end position="232"/>
    </location>
</feature>
<feature type="topological domain" description="Cytoplasmic" evidence="2">
    <location>
        <begin position="1"/>
        <end position="90"/>
    </location>
</feature>
<feature type="transmembrane region" description="Helical" evidence="2">
    <location>
        <begin position="91"/>
        <end position="111"/>
    </location>
</feature>
<feature type="topological domain" description="Extracellular" evidence="2">
    <location>
        <begin position="112"/>
        <end position="232"/>
    </location>
</feature>
<proteinExistence type="evidence at protein level"/>
<dbReference type="EMBL" id="AP012340">
    <property type="protein sequence ID" value="BAL64303.1"/>
    <property type="molecule type" value="Genomic_DNA"/>
</dbReference>
<dbReference type="RefSeq" id="WP_003898455.1">
    <property type="nucleotide sequence ID" value="NZ_KK339487.1"/>
</dbReference>
<dbReference type="SMR" id="H8EVS9"/>
<dbReference type="KEGG" id="mtn:ERDMAN_0487"/>
<dbReference type="PATRIC" id="fig|652616.3.peg.493"/>
<dbReference type="HOGENOM" id="CLU_075802_1_1_11"/>
<dbReference type="GO" id="GO:0005886">
    <property type="term" value="C:plasma membrane"/>
    <property type="evidence" value="ECO:0007669"/>
    <property type="project" value="UniProtKB-SubCell"/>
</dbReference>
<dbReference type="GO" id="GO:0016989">
    <property type="term" value="F:sigma factor antagonist activity"/>
    <property type="evidence" value="ECO:0007669"/>
    <property type="project" value="TreeGrafter"/>
</dbReference>
<dbReference type="GO" id="GO:0006417">
    <property type="term" value="P:regulation of translation"/>
    <property type="evidence" value="ECO:0007669"/>
    <property type="project" value="TreeGrafter"/>
</dbReference>
<dbReference type="Gene3D" id="1.10.10.1320">
    <property type="entry name" value="Anti-sigma factor, zinc-finger domain"/>
    <property type="match status" value="1"/>
</dbReference>
<dbReference type="InterPro" id="IPR051474">
    <property type="entry name" value="Anti-sigma-K/W_factor"/>
</dbReference>
<dbReference type="InterPro" id="IPR041916">
    <property type="entry name" value="Anti_sigma_zinc_sf"/>
</dbReference>
<dbReference type="InterPro" id="IPR018764">
    <property type="entry name" value="RskA_C"/>
</dbReference>
<dbReference type="InterPro" id="IPR053877">
    <property type="entry name" value="RskA_N"/>
</dbReference>
<dbReference type="PANTHER" id="PTHR37461">
    <property type="entry name" value="ANTI-SIGMA-K FACTOR RSKA"/>
    <property type="match status" value="1"/>
</dbReference>
<dbReference type="PANTHER" id="PTHR37461:SF1">
    <property type="entry name" value="ANTI-SIGMA-K FACTOR RSKA"/>
    <property type="match status" value="1"/>
</dbReference>
<dbReference type="Pfam" id="PF10099">
    <property type="entry name" value="RskA_C"/>
    <property type="match status" value="1"/>
</dbReference>
<dbReference type="Pfam" id="PF22618">
    <property type="entry name" value="RskA_N"/>
    <property type="match status" value="1"/>
</dbReference>
<gene>
    <name type="primary">rskA</name>
    <name type="ordered locus">ERDMAN_0487</name>
</gene>
<keyword id="KW-1003">Cell membrane</keyword>
<keyword id="KW-0472">Membrane</keyword>
<keyword id="KW-0804">Transcription</keyword>
<keyword id="KW-0805">Transcription regulation</keyword>
<keyword id="KW-0812">Transmembrane</keyword>
<keyword id="KW-1133">Transmembrane helix</keyword>
<comment type="function">
    <text evidence="1">An anti-sigma factor for extracytoplasmic function (ECF) sigma factor SigK. ECF sigma factors are held in an inactive form by an anti-sigma factor until released by regulated intramembrane proteolysis (RIP). RIP occurs when an extracytoplasmic signal triggers a concerted proteolytic cascade to transmit information and elicit cellular responses. The membrane-spanning regulatory substrate protein is first cut extracytoplasmically (site-1 protease, S1P), then within the membrane itself (site-2 protease, S2P, Rip1), while cytoplasmic proteases finish degrading the regulatory protein, liberating the sigma factor (By similarity).</text>
</comment>
<comment type="subunit">
    <text evidence="1">Interacts with ECF RNA polymerase sigma factor SigK; this should inhibit the interaction of SigK with the RNA polymerase catalytic core.</text>
</comment>
<comment type="subcellular location">
    <subcellularLocation>
        <location evidence="3">Cell membrane</location>
        <topology evidence="3">Single-pass membrane protein</topology>
    </subcellularLocation>
</comment>
<comment type="domain">
    <text evidence="1">The cytosolic domain interacts with sigma factor SigK.</text>
</comment>
<comment type="PTM">
    <text>Probably cleaved within the membrane by Rip1 near the cytoplasmic membrane interface.</text>
</comment>